<evidence type="ECO:0000250" key="1"/>
<evidence type="ECO:0000250" key="2">
    <source>
        <dbReference type="UniProtKB" id="Q61644"/>
    </source>
</evidence>
<evidence type="ECO:0000255" key="3">
    <source>
        <dbReference type="PROSITE-ProRule" id="PRU00192"/>
    </source>
</evidence>
<evidence type="ECO:0000255" key="4">
    <source>
        <dbReference type="PROSITE-ProRule" id="PRU01077"/>
    </source>
</evidence>
<evidence type="ECO:0000256" key="5">
    <source>
        <dbReference type="SAM" id="MobiDB-lite"/>
    </source>
</evidence>
<evidence type="ECO:0000269" key="6">
    <source>
    </source>
</evidence>
<evidence type="ECO:0000269" key="7">
    <source>
    </source>
</evidence>
<evidence type="ECO:0000269" key="8">
    <source>
    </source>
</evidence>
<evidence type="ECO:0000269" key="9">
    <source>
    </source>
</evidence>
<evidence type="ECO:0000269" key="10">
    <source>
    </source>
</evidence>
<evidence type="ECO:0000269" key="11">
    <source>
    </source>
</evidence>
<evidence type="ECO:0000269" key="12">
    <source>
    </source>
</evidence>
<evidence type="ECO:0000269" key="13">
    <source>
    </source>
</evidence>
<evidence type="ECO:0000305" key="14"/>
<evidence type="ECO:0000305" key="15">
    <source>
    </source>
</evidence>
<evidence type="ECO:0007744" key="16">
    <source>
    </source>
</evidence>
<keyword id="KW-1003">Cell membrane</keyword>
<keyword id="KW-0966">Cell projection</keyword>
<keyword id="KW-0175">Coiled coil</keyword>
<keyword id="KW-0963">Cytoplasm</keyword>
<keyword id="KW-0968">Cytoplasmic vesicle</keyword>
<keyword id="KW-0903">Direct protein sequencing</keyword>
<keyword id="KW-0254">Endocytosis</keyword>
<keyword id="KW-0446">Lipid-binding</keyword>
<keyword id="KW-0472">Membrane</keyword>
<keyword id="KW-0597">Phosphoprotein</keyword>
<keyword id="KW-1185">Reference proteome</keyword>
<keyword id="KW-0728">SH3 domain</keyword>
<keyword id="KW-0770">Synapse</keyword>
<keyword id="KW-0771">Synaptosome</keyword>
<accession>Q9Z0W5</accession>
<name>PACN1_RAT</name>
<reference key="1">
    <citation type="journal article" date="1999" name="Mol. Biol. Cell">
        <title>Syndapin I, a synaptic dynamin-binding protein that associates with the neural Wiskott-Aldrich syndrome protein.</title>
        <authorList>
            <person name="Qualmann B."/>
            <person name="Roos J."/>
            <person name="DiGregorio P.J."/>
            <person name="Kelly R.B."/>
        </authorList>
    </citation>
    <scope>NUCLEOTIDE SEQUENCE [MRNA]</scope>
    <scope>PROTEIN SEQUENCE OF 71-90 AND 412-429</scope>
    <scope>INTERACTION WITH DNM1; SYNJ1 AND WASL</scope>
    <scope>SUBCELLULAR LOCATION</scope>
    <scope>TISSUE SPECIFICITY</scope>
    <scope>MUTAGENESIS OF PRO-434</scope>
    <source>
        <strain>Sprague-Dawley</strain>
        <tissue>Brain</tissue>
    </source>
</reference>
<reference key="2">
    <citation type="submission" date="2007-09" db="UniProtKB">
        <authorList>
            <person name="Lubec G."/>
            <person name="Diao W."/>
            <person name="Kang S.U."/>
            <person name="Lubec S."/>
        </authorList>
    </citation>
    <scope>PROTEIN SEQUENCE OF 71-79; 197-215; 252-266; 274-282 AND 389-404</scope>
    <scope>IDENTIFICATION BY MASS SPECTROMETRY</scope>
    <source>
        <strain>Sprague-Dawley</strain>
        <tissue>Brain</tissue>
        <tissue>Hippocampus</tissue>
    </source>
</reference>
<reference key="3">
    <citation type="journal article" date="2000" name="J. Cell Sci.">
        <title>All three PACSIN isoforms bind to endocytic proteins and inhibit endocytosis.</title>
        <authorList>
            <person name="Modregger J."/>
            <person name="Ritter B."/>
            <person name="Witter B."/>
            <person name="Paulsson M."/>
            <person name="Plomann M."/>
        </authorList>
    </citation>
    <scope>SUBCELLULAR LOCATION</scope>
</reference>
<reference key="4">
    <citation type="journal article" date="2005" name="Mol. Biol. Cell">
        <title>EHD proteins associate with syndapin I and II and such interactions play a crucial role in endosomal recycling.</title>
        <authorList>
            <person name="Braun A."/>
            <person name="Pinyol R."/>
            <person name="Dahlhaus R."/>
            <person name="Koch D."/>
            <person name="Fonarev P."/>
            <person name="Grant B.D."/>
            <person name="Kessels M.M."/>
            <person name="Qualmann B."/>
        </authorList>
    </citation>
    <scope>INTERACTION WITH EHD1 AND EHD3</scope>
    <scope>TISSUE SPECIFICITY</scope>
</reference>
<reference key="5">
    <citation type="journal article" date="2006" name="Nat. Neurosci.">
        <title>Syndapin I is the phosphorylation-regulated dynamin I partner in synaptic vesicle endocytosis.</title>
        <authorList>
            <person name="Anggono V."/>
            <person name="Smillie K.J."/>
            <person name="Graham M.E."/>
            <person name="Valova V.A."/>
            <person name="Cousin M.A."/>
            <person name="Robinson P.J."/>
        </authorList>
    </citation>
    <scope>FUNCTION</scope>
    <scope>INTERACTION WITH DNM1</scope>
    <scope>PARTIAL PROTEIN SEQUENCE</scope>
    <scope>SUBCELLULAR LOCATION</scope>
    <scope>IDENTIFICATION BY MASS SPECTROMETRY</scope>
</reference>
<reference key="6">
    <citation type="journal article" date="2007" name="Cell">
        <title>Cordon-bleu is an actin nucleation factor and controls neuronal morphology.</title>
        <authorList>
            <person name="Ahuja R."/>
            <person name="Pinyol R."/>
            <person name="Reichenbach N."/>
            <person name="Custer L."/>
            <person name="Klingensmith J."/>
            <person name="Kessels M.M."/>
            <person name="Qualmann B."/>
        </authorList>
    </citation>
    <scope>INTERACTION WITH COBL AND DBNL</scope>
</reference>
<reference key="7">
    <citation type="journal article" date="2007" name="J. Neurochem.">
        <title>Syndapin I and endophilin I bind overlapping proline-rich regions of dynamin I: role in synaptic vesicle endocytosis.</title>
        <authorList>
            <person name="Anggono V."/>
            <person name="Robinson P.J."/>
        </authorList>
    </citation>
    <scope>FUNCTION</scope>
    <scope>INTERACTION WITH DNM1</scope>
    <scope>SUBCELLULAR LOCATION</scope>
    <scope>TISSUE SPECIFICITY</scope>
</reference>
<reference key="8">
    <citation type="journal article" date="2009" name="J. Neurosci.">
        <title>F-BAR proteins of the syndapin family shape the plasma membrane and are crucial for neuromorphogenesis.</title>
        <authorList>
            <person name="Dharmalingam E."/>
            <person name="Haeckel A."/>
            <person name="Pinyol R."/>
            <person name="Schwintzer L."/>
            <person name="Koch D."/>
            <person name="Kessels M.M."/>
            <person name="Qualmann B."/>
        </authorList>
    </citation>
    <scope>FUNCTION</scope>
    <scope>DOMAIN</scope>
    <scope>SUBCELLULAR LOCATION</scope>
    <scope>INTERACTION WITH WASL</scope>
</reference>
<reference key="9">
    <citation type="journal article" date="2011" name="EMBO J.">
        <title>The functions of the actin nucleator Cobl in cellular morphogenesis critically depend on syndapin I.</title>
        <authorList>
            <person name="Schwintzer L."/>
            <person name="Koch N."/>
            <person name="Ahuja R."/>
            <person name="Grimm J."/>
            <person name="Kessels M.M."/>
            <person name="Qualmann B."/>
        </authorList>
    </citation>
    <scope>FUNCTION</scope>
    <scope>SUBCELLULAR LOCATION</scope>
    <scope>INTERACTION WITH COBL</scope>
    <scope>IDENTIFICATION IN A COMPLEX WITH COBL AND WASL</scope>
</reference>
<reference key="10">
    <citation type="journal article" date="2012" name="Nat. Commun.">
        <title>Quantitative maps of protein phosphorylation sites across 14 different rat organs and tissues.</title>
        <authorList>
            <person name="Lundby A."/>
            <person name="Secher A."/>
            <person name="Lage K."/>
            <person name="Nordsborg N.B."/>
            <person name="Dmytriyev A."/>
            <person name="Lundby C."/>
            <person name="Olsen J.V."/>
        </authorList>
    </citation>
    <scope>PHOSPHORYLATION [LARGE SCALE ANALYSIS] AT SER-2; SER-346; SER-358; SER-362 AND SER-427</scope>
    <scope>IDENTIFICATION BY MASS SPECTROMETRY [LARGE SCALE ANALYSIS]</scope>
</reference>
<reference key="11">
    <citation type="journal article" date="2012" name="Proc. Natl. Acad. Sci. U.S.A.">
        <title>Phosphorylation of syndapin I F-BAR domain at two helix-capping motifs regulates membrane tubulation.</title>
        <authorList>
            <person name="Quan A."/>
            <person name="Xue J."/>
            <person name="Wielens J."/>
            <person name="Smillie K.J."/>
            <person name="Anggono V."/>
            <person name="Parker M.W."/>
            <person name="Cousin M.A."/>
            <person name="Graham M.E."/>
            <person name="Robinson P.J."/>
        </authorList>
    </citation>
    <scope>FUNCTION</scope>
    <scope>PHOSPHORYLATION AT SER-76 AND THR-181</scope>
    <scope>IDENTIFICATION BY MASS SPECTROMETRY</scope>
    <scope>SUBCELLULAR LOCATION</scope>
    <scope>SUBUNIT</scope>
    <scope>INTERACTION WITH DNM1 AND WASL</scope>
    <scope>DOMAIN</scope>
    <scope>MUTAGENESIS OF 62-LYS-LYS-63; SER-76; LYS-127; LYS-130; 154-LYS-LYS-155; THR-181; ASP-276 AND ASP-280</scope>
    <scope>TISSUE SPECIFICITY</scope>
</reference>
<feature type="chain" id="PRO_0000161794" description="Protein kinase C and casein kinase substrate in neurons protein 1">
    <location>
        <begin position="1"/>
        <end position="441"/>
    </location>
</feature>
<feature type="domain" description="F-BAR" evidence="4">
    <location>
        <begin position="10"/>
        <end position="280"/>
    </location>
</feature>
<feature type="domain" description="SH3" evidence="3">
    <location>
        <begin position="382"/>
        <end position="441"/>
    </location>
</feature>
<feature type="region of interest" description="Disordered" evidence="5">
    <location>
        <begin position="310"/>
        <end position="380"/>
    </location>
</feature>
<feature type="coiled-coil region" evidence="1">
    <location>
        <begin position="23"/>
        <end position="272"/>
    </location>
</feature>
<feature type="compositionally biased region" description="Basic and acidic residues" evidence="5">
    <location>
        <begin position="311"/>
        <end position="321"/>
    </location>
</feature>
<feature type="compositionally biased region" description="Polar residues" evidence="5">
    <location>
        <begin position="326"/>
        <end position="348"/>
    </location>
</feature>
<feature type="modified residue" description="Phosphoserine" evidence="16">
    <location>
        <position position="2"/>
    </location>
</feature>
<feature type="modified residue" description="Phosphoserine" evidence="12">
    <location>
        <position position="76"/>
    </location>
</feature>
<feature type="modified residue" description="Phosphothreonine" evidence="12">
    <location>
        <position position="181"/>
    </location>
</feature>
<feature type="modified residue" description="Phosphoserine" evidence="2">
    <location>
        <position position="343"/>
    </location>
</feature>
<feature type="modified residue" description="Phosphoserine" evidence="2">
    <location>
        <position position="345"/>
    </location>
</feature>
<feature type="modified residue" description="Phosphoserine" evidence="16">
    <location>
        <position position="346"/>
    </location>
</feature>
<feature type="modified residue" description="Phosphoserine" evidence="16">
    <location>
        <position position="358"/>
    </location>
</feature>
<feature type="modified residue" description="Phosphoserine" evidence="16">
    <location>
        <position position="362"/>
    </location>
</feature>
<feature type="modified residue" description="Phosphotyrosine" evidence="2">
    <location>
        <position position="391"/>
    </location>
</feature>
<feature type="modified residue" description="Phosphoserine" evidence="2">
    <location>
        <position position="402"/>
    </location>
</feature>
<feature type="modified residue" description="Phosphoserine" evidence="16">
    <location>
        <position position="427"/>
    </location>
</feature>
<feature type="mutagenesis site" description="Reduces membrane-binding. Abolishes membrane tubulation." evidence="12">
    <original>KR</original>
    <variation>QQ</variation>
    <location>
        <begin position="62"/>
        <end position="63"/>
    </location>
</feature>
<feature type="mutagenesis site" description="No effect on membrane-binding. Reduces membrane tubulation." evidence="12">
    <original>S</original>
    <variation>A</variation>
    <location>
        <position position="76"/>
    </location>
</feature>
<feature type="mutagenesis site" description="Reduces membrane-binding; when associated with Q-130. Abolishes membrane tubulation." evidence="12">
    <original>K</original>
    <variation>Q</variation>
    <location>
        <position position="127"/>
    </location>
</feature>
<feature type="mutagenesis site" description="Reduces membrane-binding. Abolishes membrane tubulation; when associated with Q-127." evidence="12">
    <original>K</original>
    <variation>Q</variation>
    <location>
        <position position="130"/>
    </location>
</feature>
<feature type="mutagenesis site" description="Reduces membrane-binding. Abolishes membrane tubulation." evidence="12">
    <original>KK</original>
    <variation>QQ</variation>
    <location>
        <begin position="154"/>
        <end position="155"/>
    </location>
</feature>
<feature type="mutagenesis site" description="No effect on membrane-binding." evidence="12">
    <original>T</original>
    <variation>A</variation>
    <location>
        <position position="181"/>
    </location>
</feature>
<feature type="mutagenesis site" description="Reduces membrane-binding. Abolishes membrane tubulation." evidence="12">
    <original>T</original>
    <variation>E</variation>
    <location>
        <position position="181"/>
    </location>
</feature>
<feature type="mutagenesis site" description="Reduces membrane tubulation; when associated with A-280." evidence="12">
    <original>D</original>
    <variation>A</variation>
    <location>
        <position position="276"/>
    </location>
</feature>
<feature type="mutagenesis site" description="Reduces membrane tubulation; when associated with A-276." evidence="12">
    <original>D</original>
    <variation>A</variation>
    <location>
        <position position="280"/>
    </location>
</feature>
<feature type="mutagenesis site" description="Abolishes interaction with DNM1, SYNJ1 and WASL." evidence="13">
    <original>P</original>
    <variation>L</variation>
    <location>
        <position position="434"/>
    </location>
</feature>
<proteinExistence type="evidence at protein level"/>
<sequence>MSGPYDEASEEITDSFWEVGNYKRTVKRIDDGHRLCNDLMSCVQERAKIEKAYAQQLTDWAKRWRQLIEKGPQYGSLERAWGAMMTEADKVSELHQEVKNSLLNEDLEKVKNWQKDAYHKQIMGGFKETKEAEDGFRKAQKPWAKKMKELEAAKKAYHLACKEEKLAMTREMNSKTEQSVTPEQQKKLVDKVDKCRQDVQKTQEKYEKVLEDVGKTTPQYMEGMEQVFEQCQQFEEKRLVFLKEVLLDIKRHLNLAENSSYIHVYRELEQAIRGADAQEDLRWFRSTSGPGMPMNWPQFEEWNPDLPHTAAKKEKQPKKAEGAALSNATGAVESTSQAGDRGSVSSYDRGQAYATEWSDDESGNPFGGNEANGGANPFEDDAKGVRVRALYDYDGQEQDELSFKAGDELTKLGEEDEQGWCRGRLDSGQLGLYPANYVEAI</sequence>
<protein>
    <recommendedName>
        <fullName>Protein kinase C and casein kinase substrate in neurons protein 1</fullName>
    </recommendedName>
    <alternativeName>
        <fullName>Dynamin proline-rich domain-interacting protein</fullName>
        <shortName>Dynamin PRD-interacting protein</shortName>
    </alternativeName>
    <alternativeName>
        <fullName>Synaptic, dynamin-associated protein I</fullName>
    </alternativeName>
    <alternativeName>
        <fullName>Syndapin-1</fullName>
    </alternativeName>
    <alternativeName>
        <fullName>Syndapin-I</fullName>
        <shortName>SdpI</shortName>
    </alternativeName>
</protein>
<comment type="function">
    <text evidence="7 8 10 11 12">Binds to membranes via its F-BAR domain and mediates membrane tubulation. Plays a role in the reorganization of the microtubule cytoskeleton via its interaction with MAPT; this decreases microtubule stability and inhibits MAPT-induced microtubule polymerization. Plays a role in cellular transport processes by recruiting DNM1, DNM2 and DNM3 to membranes. Plays a role in the reorganization of the actin cytoskeleton and in neuron morphogenesis via its interaction with COBL and WASL, and by recruiting COBL to the cell cortex. Plays a role in the regulation of neurite formation, neurite branching and the regulation of neurite length. Required for normal synaptic vesicle endocytosis; this process retrieves previously released neurotransmitters to accommodate multiple cycles of neurotransmission. Required for normal excitatory and inhibitory synaptic transmission.</text>
</comment>
<comment type="subunit">
    <text evidence="1 6 7 8 9 10 11 12 13">Homodimer. May form heterooligomers with other PACSINs. Interacts with MAPT. Interacts with TRPV4 (By similarity). Interacts (via SH3 domain) with SYNJ1 and WASL. Interacts (via SH3 domain) with DNM1; the interaction is reduced by DNM1 phosphorylation. Interacts with DNM2 and DNM3. Interacts with both COBL and DBNL. Identified in a complex composed of COBL, PACSIN1 and WASL. Interacts with EHD1 and EHD3.</text>
</comment>
<comment type="interaction">
    <interactant intactId="EBI-1550185">
        <id>Q9Z0W5</id>
    </interactant>
    <interactant intactId="EBI-7003590">
        <id>D3ZUI5</id>
        <label>Cobl</label>
    </interactant>
    <organismsDiffer>false</organismsDiffer>
    <experiments>6</experiments>
</comment>
<comment type="interaction">
    <interactant intactId="EBI-1550185">
        <id>Q9Z0W5</id>
    </interactant>
    <interactant intactId="EBI-80070">
        <id>P21575</id>
        <label>Dnm1</label>
    </interactant>
    <organismsDiffer>false</organismsDiffer>
    <experiments>4</experiments>
</comment>
<comment type="interaction">
    <interactant intactId="EBI-1550185">
        <id>Q9Z0W5</id>
    </interactant>
    <interactant intactId="EBI-1550138">
        <id>Q5NBX1</id>
        <label>Cobl</label>
    </interactant>
    <organismsDiffer>true</organismsDiffer>
    <experiments>14</experiments>
</comment>
<comment type="interaction">
    <interactant intactId="EBI-1550185">
        <id>Q9Z0W5</id>
    </interactant>
    <interactant intactId="EBI-16174243">
        <id>Q5NBX1-1</id>
        <label>Cobl</label>
    </interactant>
    <organismsDiffer>true</organismsDiffer>
    <experiments>2</experiments>
</comment>
<comment type="interaction">
    <interactant intactId="EBI-1550185">
        <id>Q9Z0W5</id>
    </interactant>
    <interactant intactId="EBI-745080">
        <id>Q9NZQ3</id>
        <label>NCKIPSD</label>
    </interactant>
    <organismsDiffer>true</organismsDiffer>
    <experiments>6</experiments>
</comment>
<comment type="subcellular location">
    <subcellularLocation>
        <location>Cytoplasm</location>
    </subcellularLocation>
    <subcellularLocation>
        <location>Cell projection</location>
    </subcellularLocation>
    <subcellularLocation>
        <location>Synapse</location>
        <location>Synaptosome</location>
    </subcellularLocation>
    <subcellularLocation>
        <location evidence="1">Cell projection</location>
        <location evidence="1">Ruffle membrane</location>
    </subcellularLocation>
    <subcellularLocation>
        <location>Membrane</location>
        <topology>Peripheral membrane protein</topology>
    </subcellularLocation>
    <subcellularLocation>
        <location evidence="1">Cytoplasmic vesicle membrane</location>
        <topology evidence="1">Peripheral membrane protein</topology>
    </subcellularLocation>
    <subcellularLocation>
        <location evidence="1">Synapse</location>
    </subcellularLocation>
    <subcellularLocation>
        <location evidence="1">Cytoplasm</location>
        <location evidence="1">Cytosol</location>
    </subcellularLocation>
    <subcellularLocation>
        <location>Cell membrane</location>
        <topology>Peripheral membrane protein</topology>
        <orientation>Cytoplasmic side</orientation>
    </subcellularLocation>
    <text evidence="1">Colocalizes with MAPT in axons (By similarity). In primary neuronal cultures, present at a high level in presynaptic nerve terminals and in the cell body. Colocalizes with DNM1 at vesicular structures in the cell body and neurites.</text>
</comment>
<comment type="tissue specificity">
    <text evidence="6 8 12 13">Highly expressed in brain (at protein level).</text>
</comment>
<comment type="domain">
    <text evidence="1">The F-BAR domain forms a coiled coil and mediates membrane-binding and membrane tubulation. In the autoinhibited conformation, interaction with the SH3 domain inhibits membrane tubulation mediated by the F-BAR domain. DNM1 binding abolishes autoinhibition (By similarity).</text>
</comment>
<comment type="PTM">
    <text evidence="15">Phosphorylated by casein kinase 2 (CK2) and protein kinase C (PKC).</text>
</comment>
<comment type="similarity">
    <text evidence="14">Belongs to the PACSIN family.</text>
</comment>
<gene>
    <name type="primary">Pacsin1</name>
</gene>
<dbReference type="EMBL" id="AF104402">
    <property type="protein sequence ID" value="AAD16887.1"/>
    <property type="molecule type" value="mRNA"/>
</dbReference>
<dbReference type="RefSeq" id="NP_058990.1">
    <property type="nucleotide sequence ID" value="NM_017294.1"/>
</dbReference>
<dbReference type="SMR" id="Q9Z0W5"/>
<dbReference type="BioGRID" id="248321">
    <property type="interactions" value="4"/>
</dbReference>
<dbReference type="CORUM" id="Q9Z0W5"/>
<dbReference type="DIP" id="DIP-39836N"/>
<dbReference type="ELM" id="Q9Z0W5"/>
<dbReference type="FunCoup" id="Q9Z0W5">
    <property type="interactions" value="1536"/>
</dbReference>
<dbReference type="IntAct" id="Q9Z0W5">
    <property type="interactions" value="8"/>
</dbReference>
<dbReference type="MINT" id="Q9Z0W5"/>
<dbReference type="STRING" id="10116.ENSRNOP00000069980"/>
<dbReference type="GlyGen" id="Q9Z0W5">
    <property type="glycosylation" value="1 site, 1 O-linked glycan (1 site)"/>
</dbReference>
<dbReference type="iPTMnet" id="Q9Z0W5"/>
<dbReference type="PhosphoSitePlus" id="Q9Z0W5"/>
<dbReference type="SwissPalm" id="Q9Z0W5"/>
<dbReference type="PaxDb" id="10116-ENSRNOP00000036285"/>
<dbReference type="GeneID" id="29704"/>
<dbReference type="KEGG" id="rno:29704"/>
<dbReference type="UCSC" id="RGD:3247">
    <property type="organism name" value="rat"/>
</dbReference>
<dbReference type="AGR" id="RGD:3247"/>
<dbReference type="CTD" id="29993"/>
<dbReference type="RGD" id="3247">
    <property type="gene designation" value="Pacsin1"/>
</dbReference>
<dbReference type="eggNOG" id="KOG2856">
    <property type="taxonomic scope" value="Eukaryota"/>
</dbReference>
<dbReference type="InParanoid" id="Q9Z0W5"/>
<dbReference type="PhylomeDB" id="Q9Z0W5"/>
<dbReference type="Reactome" id="R-RNO-8856828">
    <property type="pathway name" value="Clathrin-mediated endocytosis"/>
</dbReference>
<dbReference type="PRO" id="PR:Q9Z0W5"/>
<dbReference type="Proteomes" id="UP000002494">
    <property type="component" value="Unplaced"/>
</dbReference>
<dbReference type="GO" id="GO:0043679">
    <property type="term" value="C:axon terminus"/>
    <property type="evidence" value="ECO:0000314"/>
    <property type="project" value="UniProtKB"/>
</dbReference>
<dbReference type="GO" id="GO:0030137">
    <property type="term" value="C:COPI-coated vesicle"/>
    <property type="evidence" value="ECO:0000266"/>
    <property type="project" value="RGD"/>
</dbReference>
<dbReference type="GO" id="GO:0005737">
    <property type="term" value="C:cytoplasm"/>
    <property type="evidence" value="ECO:0000250"/>
    <property type="project" value="UniProtKB"/>
</dbReference>
<dbReference type="GO" id="GO:0030659">
    <property type="term" value="C:cytoplasmic vesicle membrane"/>
    <property type="evidence" value="ECO:0007669"/>
    <property type="project" value="UniProtKB-SubCell"/>
</dbReference>
<dbReference type="GO" id="GO:0005829">
    <property type="term" value="C:cytosol"/>
    <property type="evidence" value="ECO:0007669"/>
    <property type="project" value="UniProtKB-SubCell"/>
</dbReference>
<dbReference type="GO" id="GO:0005768">
    <property type="term" value="C:endosome"/>
    <property type="evidence" value="ECO:0000318"/>
    <property type="project" value="GO_Central"/>
</dbReference>
<dbReference type="GO" id="GO:0098978">
    <property type="term" value="C:glutamatergic synapse"/>
    <property type="evidence" value="ECO:0000314"/>
    <property type="project" value="SynGO"/>
</dbReference>
<dbReference type="GO" id="GO:0048471">
    <property type="term" value="C:perinuclear region of cytoplasm"/>
    <property type="evidence" value="ECO:0000314"/>
    <property type="project" value="BHF-UCL"/>
</dbReference>
<dbReference type="GO" id="GO:0098684">
    <property type="term" value="C:photoreceptor ribbon synapse"/>
    <property type="evidence" value="ECO:0000266"/>
    <property type="project" value="RGD"/>
</dbReference>
<dbReference type="GO" id="GO:0005886">
    <property type="term" value="C:plasma membrane"/>
    <property type="evidence" value="ECO:0000314"/>
    <property type="project" value="BHF-UCL"/>
</dbReference>
<dbReference type="GO" id="GO:0098839">
    <property type="term" value="C:postsynaptic density membrane"/>
    <property type="evidence" value="ECO:0000314"/>
    <property type="project" value="SynGO"/>
</dbReference>
<dbReference type="GO" id="GO:0098833">
    <property type="term" value="C:presynaptic endocytic zone"/>
    <property type="evidence" value="ECO:0000266"/>
    <property type="project" value="RGD"/>
</dbReference>
<dbReference type="GO" id="GO:0032587">
    <property type="term" value="C:ruffle membrane"/>
    <property type="evidence" value="ECO:0000250"/>
    <property type="project" value="UniProtKB"/>
</dbReference>
<dbReference type="GO" id="GO:0045202">
    <property type="term" value="C:synapse"/>
    <property type="evidence" value="ECO:0000314"/>
    <property type="project" value="BHF-UCL"/>
</dbReference>
<dbReference type="GO" id="GO:0043195">
    <property type="term" value="C:terminal bouton"/>
    <property type="evidence" value="ECO:0007005"/>
    <property type="project" value="ParkinsonsUK-UCL"/>
</dbReference>
<dbReference type="GO" id="GO:0008092">
    <property type="term" value="F:cytoskeletal protein binding"/>
    <property type="evidence" value="ECO:0000266"/>
    <property type="project" value="RGD"/>
</dbReference>
<dbReference type="GO" id="GO:0042802">
    <property type="term" value="F:identical protein binding"/>
    <property type="evidence" value="ECO:0000266"/>
    <property type="project" value="RGD"/>
</dbReference>
<dbReference type="GO" id="GO:0005543">
    <property type="term" value="F:phospholipid binding"/>
    <property type="evidence" value="ECO:0000314"/>
    <property type="project" value="UniProtKB"/>
</dbReference>
<dbReference type="GO" id="GO:0007015">
    <property type="term" value="P:actin filament organization"/>
    <property type="evidence" value="ECO:0007669"/>
    <property type="project" value="InterPro"/>
</dbReference>
<dbReference type="GO" id="GO:0007010">
    <property type="term" value="P:cytoskeleton organization"/>
    <property type="evidence" value="ECO:0000314"/>
    <property type="project" value="RGD"/>
</dbReference>
<dbReference type="GO" id="GO:0045806">
    <property type="term" value="P:negative regulation of endocytosis"/>
    <property type="evidence" value="ECO:0000266"/>
    <property type="project" value="RGD"/>
</dbReference>
<dbReference type="GO" id="GO:0048812">
    <property type="term" value="P:neuron projection morphogenesis"/>
    <property type="evidence" value="ECO:0000315"/>
    <property type="project" value="UniProtKB"/>
</dbReference>
<dbReference type="GO" id="GO:0097320">
    <property type="term" value="P:plasma membrane tubulation"/>
    <property type="evidence" value="ECO:0000315"/>
    <property type="project" value="UniProtKB"/>
</dbReference>
<dbReference type="GO" id="GO:1900006">
    <property type="term" value="P:positive regulation of dendrite development"/>
    <property type="evidence" value="ECO:0000314"/>
    <property type="project" value="BHF-UCL"/>
</dbReference>
<dbReference type="GO" id="GO:0072657">
    <property type="term" value="P:protein localization to membrane"/>
    <property type="evidence" value="ECO:0000250"/>
    <property type="project" value="UniProtKB"/>
</dbReference>
<dbReference type="GO" id="GO:0072659">
    <property type="term" value="P:protein localization to plasma membrane"/>
    <property type="evidence" value="ECO:0000314"/>
    <property type="project" value="BHF-UCL"/>
</dbReference>
<dbReference type="GO" id="GO:0030100">
    <property type="term" value="P:regulation of endocytosis"/>
    <property type="evidence" value="ECO:0000318"/>
    <property type="project" value="GO_Central"/>
</dbReference>
<dbReference type="GO" id="GO:0099149">
    <property type="term" value="P:regulation of postsynaptic neurotransmitter receptor internalization"/>
    <property type="evidence" value="ECO:0000314"/>
    <property type="project" value="SynGO"/>
</dbReference>
<dbReference type="GO" id="GO:0048488">
    <property type="term" value="P:synaptic vesicle endocytosis"/>
    <property type="evidence" value="ECO:0000250"/>
    <property type="project" value="UniProtKB"/>
</dbReference>
<dbReference type="CDD" id="cd07680">
    <property type="entry name" value="F-BAR_PACSIN1"/>
    <property type="match status" value="1"/>
</dbReference>
<dbReference type="CDD" id="cd11998">
    <property type="entry name" value="SH3_PACSIN1-2"/>
    <property type="match status" value="1"/>
</dbReference>
<dbReference type="FunFam" id="2.30.30.40:FF:000014">
    <property type="entry name" value="Kinase C and casein kinase substrate in neurons protein"/>
    <property type="match status" value="1"/>
</dbReference>
<dbReference type="FunFam" id="1.20.1270.60:FF:000205">
    <property type="entry name" value="Protein kinase C and casein kinase substrate in neurons protein 1"/>
    <property type="match status" value="1"/>
</dbReference>
<dbReference type="Gene3D" id="1.20.1270.60">
    <property type="entry name" value="Arfaptin homology (AH) domain/BAR domain"/>
    <property type="match status" value="1"/>
</dbReference>
<dbReference type="Gene3D" id="2.30.30.40">
    <property type="entry name" value="SH3 Domains"/>
    <property type="match status" value="1"/>
</dbReference>
<dbReference type="InterPro" id="IPR027267">
    <property type="entry name" value="AH/BAR_dom_sf"/>
</dbReference>
<dbReference type="InterPro" id="IPR031160">
    <property type="entry name" value="F_BAR"/>
</dbReference>
<dbReference type="InterPro" id="IPR001060">
    <property type="entry name" value="FCH_dom"/>
</dbReference>
<dbReference type="InterPro" id="IPR035743">
    <property type="entry name" value="PACSIN1/PACSIN2_SH3"/>
</dbReference>
<dbReference type="InterPro" id="IPR037454">
    <property type="entry name" value="PACSIN1_F-BAR"/>
</dbReference>
<dbReference type="InterPro" id="IPR036028">
    <property type="entry name" value="SH3-like_dom_sf"/>
</dbReference>
<dbReference type="InterPro" id="IPR001452">
    <property type="entry name" value="SH3_domain"/>
</dbReference>
<dbReference type="PANTHER" id="PTHR23065">
    <property type="entry name" value="PROLINE-SERINE-THREONINE PHOSPHATASE INTERACTING PROTEIN 1"/>
    <property type="match status" value="1"/>
</dbReference>
<dbReference type="PANTHER" id="PTHR23065:SF16">
    <property type="entry name" value="PROTEIN KINASE C AND CASEIN KINASE SUBSTRATE IN NEURONS PROTEIN 1"/>
    <property type="match status" value="1"/>
</dbReference>
<dbReference type="Pfam" id="PF00611">
    <property type="entry name" value="FCH"/>
    <property type="match status" value="1"/>
</dbReference>
<dbReference type="Pfam" id="PF14604">
    <property type="entry name" value="SH3_9"/>
    <property type="match status" value="1"/>
</dbReference>
<dbReference type="PRINTS" id="PR00452">
    <property type="entry name" value="SH3DOMAIN"/>
</dbReference>
<dbReference type="SMART" id="SM00055">
    <property type="entry name" value="FCH"/>
    <property type="match status" value="1"/>
</dbReference>
<dbReference type="SMART" id="SM00326">
    <property type="entry name" value="SH3"/>
    <property type="match status" value="1"/>
</dbReference>
<dbReference type="SUPFAM" id="SSF103657">
    <property type="entry name" value="BAR/IMD domain-like"/>
    <property type="match status" value="1"/>
</dbReference>
<dbReference type="SUPFAM" id="SSF50044">
    <property type="entry name" value="SH3-domain"/>
    <property type="match status" value="1"/>
</dbReference>
<dbReference type="PROSITE" id="PS51741">
    <property type="entry name" value="F_BAR"/>
    <property type="match status" value="1"/>
</dbReference>
<dbReference type="PROSITE" id="PS50002">
    <property type="entry name" value="SH3"/>
    <property type="match status" value="1"/>
</dbReference>
<organism>
    <name type="scientific">Rattus norvegicus</name>
    <name type="common">Rat</name>
    <dbReference type="NCBI Taxonomy" id="10116"/>
    <lineage>
        <taxon>Eukaryota</taxon>
        <taxon>Metazoa</taxon>
        <taxon>Chordata</taxon>
        <taxon>Craniata</taxon>
        <taxon>Vertebrata</taxon>
        <taxon>Euteleostomi</taxon>
        <taxon>Mammalia</taxon>
        <taxon>Eutheria</taxon>
        <taxon>Euarchontoglires</taxon>
        <taxon>Glires</taxon>
        <taxon>Rodentia</taxon>
        <taxon>Myomorpha</taxon>
        <taxon>Muroidea</taxon>
        <taxon>Muridae</taxon>
        <taxon>Murinae</taxon>
        <taxon>Rattus</taxon>
    </lineage>
</organism>